<keyword id="KW-0027">Amidation</keyword>
<keyword id="KW-0903">Direct protein sequencing</keyword>
<keyword id="KW-0286">Flight</keyword>
<keyword id="KW-0372">Hormone</keyword>
<keyword id="KW-0527">Neuropeptide</keyword>
<keyword id="KW-0873">Pyrrolidone carboxylic acid</keyword>
<keyword id="KW-0964">Secreted</keyword>
<reference key="1">
    <citation type="journal article" date="1992" name="Biol. Chem. Hoppe-Seyler">
        <title>Primary structures of neuropeptides isolated from the corpora cardiaca of various cetonid beetle species determined by pulsed-liquid phase sequencing and tandem fast atom bombardment mass spectrometry.</title>
        <authorList>
            <person name="Gaede G."/>
            <person name="Lopata A."/>
            <person name="Kellner R."/>
            <person name="Rinehart K.L. Jr."/>
        </authorList>
    </citation>
    <scope>PROTEIN SEQUENCE</scope>
    <scope>PYROGLUTAMATE FORMATION AT GLN-1</scope>
    <scope>AMIDATION AT TRP-8</scope>
    <scope>SUBCELLULAR LOCATION</scope>
    <source>
        <tissue>Corpora cardiaca</tissue>
    </source>
</reference>
<name>AKH_PACMA</name>
<sequence>QLNYSPDW</sequence>
<accession>P84242</accession>
<accession>P25423</accession>
<evidence type="ECO:0000269" key="1">
    <source>
    </source>
</evidence>
<evidence type="ECO:0000305" key="2"/>
<protein>
    <recommendedName>
        <fullName>Adipokinetic hormone</fullName>
        <shortName>AKH</shortName>
    </recommendedName>
</protein>
<proteinExistence type="evidence at protein level"/>
<comment type="function">
    <text>This hormone, released from cells in the corpora cardiaca, causes release of diglycerides from the fat body and stimulation of muscles to use these diglycerides as an energy source during energy-demanding processes.</text>
</comment>
<comment type="subcellular location">
    <subcellularLocation>
        <location evidence="1">Secreted</location>
    </subcellularLocation>
</comment>
<comment type="similarity">
    <text evidence="2">Belongs to the AKH/HRTH/RPCH family.</text>
</comment>
<organism>
    <name type="scientific">Pachnoda marginata</name>
    <name type="common">Flower beetle</name>
    <dbReference type="NCBI Taxonomy" id="7058"/>
    <lineage>
        <taxon>Eukaryota</taxon>
        <taxon>Metazoa</taxon>
        <taxon>Ecdysozoa</taxon>
        <taxon>Arthropoda</taxon>
        <taxon>Hexapoda</taxon>
        <taxon>Insecta</taxon>
        <taxon>Pterygota</taxon>
        <taxon>Neoptera</taxon>
        <taxon>Endopterygota</taxon>
        <taxon>Coleoptera</taxon>
        <taxon>Polyphaga</taxon>
        <taxon>Scarabaeiformia</taxon>
        <taxon>Scarabaeidae</taxon>
        <taxon>Cetoniinae</taxon>
        <taxon>Pachnoda</taxon>
    </lineage>
</organism>
<feature type="peptide" id="PRO_0000043423" description="Adipokinetic hormone">
    <location>
        <begin position="1"/>
        <end position="8"/>
    </location>
</feature>
<feature type="modified residue" description="Pyrrolidone carboxylic acid" evidence="1">
    <location>
        <position position="1"/>
    </location>
</feature>
<feature type="modified residue" description="Tryptophan amide" evidence="1">
    <location>
        <position position="8"/>
    </location>
</feature>
<dbReference type="PIR" id="S21663">
    <property type="entry name" value="S21663"/>
</dbReference>
<dbReference type="GO" id="GO:0005576">
    <property type="term" value="C:extracellular region"/>
    <property type="evidence" value="ECO:0007669"/>
    <property type="project" value="UniProtKB-SubCell"/>
</dbReference>
<dbReference type="GO" id="GO:0005179">
    <property type="term" value="F:hormone activity"/>
    <property type="evidence" value="ECO:0007669"/>
    <property type="project" value="UniProtKB-KW"/>
</dbReference>
<dbReference type="GO" id="GO:0007629">
    <property type="term" value="P:flight behavior"/>
    <property type="evidence" value="ECO:0007669"/>
    <property type="project" value="UniProtKB-KW"/>
</dbReference>
<dbReference type="GO" id="GO:0007218">
    <property type="term" value="P:neuropeptide signaling pathway"/>
    <property type="evidence" value="ECO:0007669"/>
    <property type="project" value="UniProtKB-KW"/>
</dbReference>
<dbReference type="InterPro" id="IPR002047">
    <property type="entry name" value="Adipokinetic_hormone_CS"/>
</dbReference>
<dbReference type="PROSITE" id="PS00256">
    <property type="entry name" value="AKH"/>
    <property type="match status" value="1"/>
</dbReference>